<comment type="function">
    <text evidence="1">Guanylyltransferase that catalyzes the activation of (2S)-2-phospholactate (2-PL) as (2S)-lactyl-2-diphospho-5'-guanosine, via the condensation of 2-PL with GTP. It is involved in the biosynthesis of coenzyme F420, a hydride carrier cofactor.</text>
</comment>
<comment type="catalytic activity">
    <reaction evidence="1">
        <text>(2S)-2-phospholactate + GTP + H(+) = (2S)-lactyl-2-diphospho-5'-guanosine + diphosphate</text>
        <dbReference type="Rhea" id="RHEA:63424"/>
        <dbReference type="ChEBI" id="CHEBI:15378"/>
        <dbReference type="ChEBI" id="CHEBI:33019"/>
        <dbReference type="ChEBI" id="CHEBI:37565"/>
        <dbReference type="ChEBI" id="CHEBI:59435"/>
        <dbReference type="ChEBI" id="CHEBI:59906"/>
        <dbReference type="EC" id="2.7.7.68"/>
    </reaction>
</comment>
<comment type="pathway">
    <text evidence="1">Cofactor biosynthesis; coenzyme F420 biosynthesis.</text>
</comment>
<comment type="subunit">
    <text evidence="1">Homodimer.</text>
</comment>
<comment type="similarity">
    <text evidence="1">Belongs to the CofC family.</text>
</comment>
<dbReference type="EC" id="2.7.7.68" evidence="1"/>
<dbReference type="EMBL" id="CP000867">
    <property type="protein sequence ID" value="ABX01652.1"/>
    <property type="molecule type" value="Genomic_DNA"/>
</dbReference>
<dbReference type="SMR" id="A9A8H9"/>
<dbReference type="STRING" id="444158.MmarC6_0835"/>
<dbReference type="KEGG" id="mmx:MmarC6_0835"/>
<dbReference type="eggNOG" id="arCOG04472">
    <property type="taxonomic scope" value="Archaea"/>
</dbReference>
<dbReference type="HOGENOM" id="CLU_076569_2_0_2"/>
<dbReference type="OrthoDB" id="11179at2157"/>
<dbReference type="PhylomeDB" id="A9A8H9"/>
<dbReference type="UniPathway" id="UPA00071"/>
<dbReference type="GO" id="GO:0005525">
    <property type="term" value="F:GTP binding"/>
    <property type="evidence" value="ECO:0007669"/>
    <property type="project" value="UniProtKB-KW"/>
</dbReference>
<dbReference type="GO" id="GO:0043814">
    <property type="term" value="F:phospholactate guanylyltransferase activity"/>
    <property type="evidence" value="ECO:0007669"/>
    <property type="project" value="UniProtKB-EC"/>
</dbReference>
<dbReference type="GO" id="GO:0052645">
    <property type="term" value="P:F420-0 metabolic process"/>
    <property type="evidence" value="ECO:0007669"/>
    <property type="project" value="UniProtKB-UniRule"/>
</dbReference>
<dbReference type="Gene3D" id="3.90.550.10">
    <property type="entry name" value="Spore Coat Polysaccharide Biosynthesis Protein SpsA, Chain A"/>
    <property type="match status" value="1"/>
</dbReference>
<dbReference type="HAMAP" id="MF_02114">
    <property type="entry name" value="CofC"/>
    <property type="match status" value="1"/>
</dbReference>
<dbReference type="InterPro" id="IPR002835">
    <property type="entry name" value="CofC"/>
</dbReference>
<dbReference type="InterPro" id="IPR029044">
    <property type="entry name" value="Nucleotide-diphossugar_trans"/>
</dbReference>
<dbReference type="NCBIfam" id="TIGR03552">
    <property type="entry name" value="F420_cofC"/>
    <property type="match status" value="1"/>
</dbReference>
<dbReference type="PANTHER" id="PTHR40392">
    <property type="entry name" value="2-PHOSPHO-L-LACTATE GUANYLYLTRANSFERASE"/>
    <property type="match status" value="1"/>
</dbReference>
<dbReference type="PANTHER" id="PTHR40392:SF1">
    <property type="entry name" value="2-PHOSPHO-L-LACTATE GUANYLYLTRANSFERASE"/>
    <property type="match status" value="1"/>
</dbReference>
<dbReference type="Pfam" id="PF01983">
    <property type="entry name" value="CofC"/>
    <property type="match status" value="1"/>
</dbReference>
<dbReference type="SUPFAM" id="SSF53448">
    <property type="entry name" value="Nucleotide-diphospho-sugar transferases"/>
    <property type="match status" value="1"/>
</dbReference>
<feature type="chain" id="PRO_0000398746" description="2-phospho-L-lactate guanylyltransferase">
    <location>
        <begin position="1"/>
        <end position="222"/>
    </location>
</feature>
<organism>
    <name type="scientific">Methanococcus maripaludis (strain C6 / ATCC BAA-1332)</name>
    <dbReference type="NCBI Taxonomy" id="444158"/>
    <lineage>
        <taxon>Archaea</taxon>
        <taxon>Methanobacteriati</taxon>
        <taxon>Methanobacteriota</taxon>
        <taxon>Methanomada group</taxon>
        <taxon>Methanococci</taxon>
        <taxon>Methanococcales</taxon>
        <taxon>Methanococcaceae</taxon>
        <taxon>Methanococcus</taxon>
    </lineage>
</organism>
<reference key="1">
    <citation type="submission" date="2007-10" db="EMBL/GenBank/DDBJ databases">
        <title>Complete sequence of Methanococcus maripaludis C6.</title>
        <authorList>
            <consortium name="US DOE Joint Genome Institute"/>
            <person name="Copeland A."/>
            <person name="Lucas S."/>
            <person name="Lapidus A."/>
            <person name="Barry K."/>
            <person name="Glavina del Rio T."/>
            <person name="Dalin E."/>
            <person name="Tice H."/>
            <person name="Pitluck S."/>
            <person name="Clum A."/>
            <person name="Schmutz J."/>
            <person name="Larimer F."/>
            <person name="Land M."/>
            <person name="Hauser L."/>
            <person name="Kyrpides N."/>
            <person name="Mikhailova N."/>
            <person name="Sieprawska-Lupa M."/>
            <person name="Whitman W.B."/>
            <person name="Richardson P."/>
        </authorList>
    </citation>
    <scope>NUCLEOTIDE SEQUENCE [LARGE SCALE GENOMIC DNA]</scope>
    <source>
        <strain>C6 / ATCC BAA-1332</strain>
    </source>
</reference>
<evidence type="ECO:0000255" key="1">
    <source>
        <dbReference type="HAMAP-Rule" id="MF_02114"/>
    </source>
</evidence>
<gene>
    <name evidence="1" type="primary">cofC</name>
    <name type="ordered locus">MmarC6_0835</name>
</gene>
<protein>
    <recommendedName>
        <fullName evidence="1">2-phospho-L-lactate guanylyltransferase</fullName>
        <shortName evidence="1">LP guanylyltransferase</shortName>
        <ecNumber evidence="1">2.7.7.68</ecNumber>
    </recommendedName>
</protein>
<accession>A9A8H9</accession>
<name>COFC_METM6</name>
<sequence length="222" mass="24950">MLAALIPVSPLSNVKSRLKEFLSSDERIELIKNILIDTYETVKECSDACYVVSKDEEILEFSKNLGIIPIRENSSVKGLNEAINFSLKFIKEDSILITPADVPILKEENLKVITNKSVKNSIVICPSRGGGTNLLLLNPKDCMKTQFEGFSFLKHIEEAEKNNLKVIKCHSFYTSIDVNTVEDLGEIYIHGTDTKTYQFLKNLGIEVLPKHSSAGRFNVIRK</sequence>
<proteinExistence type="inferred from homology"/>
<keyword id="KW-0342">GTP-binding</keyword>
<keyword id="KW-0547">Nucleotide-binding</keyword>
<keyword id="KW-0548">Nucleotidyltransferase</keyword>
<keyword id="KW-0808">Transferase</keyword>